<gene>
    <name evidence="1" type="primary">metAA</name>
    <name type="synonym">metA</name>
    <name type="ordered locus">SP_1576</name>
</gene>
<organism>
    <name type="scientific">Streptococcus pneumoniae serotype 4 (strain ATCC BAA-334 / TIGR4)</name>
    <dbReference type="NCBI Taxonomy" id="170187"/>
    <lineage>
        <taxon>Bacteria</taxon>
        <taxon>Bacillati</taxon>
        <taxon>Bacillota</taxon>
        <taxon>Bacilli</taxon>
        <taxon>Lactobacillales</taxon>
        <taxon>Streptococcaceae</taxon>
        <taxon>Streptococcus</taxon>
    </lineage>
</organism>
<feature type="chain" id="PRO_0000199761" description="Homoserine O-acetyltransferase">
    <location>
        <begin position="1"/>
        <end position="314"/>
    </location>
</feature>
<feature type="active site" description="Acyl-thioester intermediate" evidence="1">
    <location>
        <position position="142"/>
    </location>
</feature>
<feature type="active site" description="Proton acceptor" evidence="1">
    <location>
        <position position="235"/>
    </location>
</feature>
<feature type="active site" evidence="1">
    <location>
        <position position="237"/>
    </location>
</feature>
<feature type="binding site" evidence="1">
    <location>
        <position position="163"/>
    </location>
    <ligand>
        <name>substrate</name>
    </ligand>
</feature>
<feature type="binding site" evidence="1">
    <location>
        <position position="192"/>
    </location>
    <ligand>
        <name>substrate</name>
    </ligand>
</feature>
<feature type="binding site" evidence="1">
    <location>
        <position position="249"/>
    </location>
    <ligand>
        <name>substrate</name>
    </ligand>
</feature>
<feature type="site" description="Important for acyl-CoA specificity" evidence="1">
    <location>
        <position position="111"/>
    </location>
</feature>
<feature type="site" description="Important for substrate specificity" evidence="1">
    <location>
        <position position="192"/>
    </location>
</feature>
<keyword id="KW-0012">Acyltransferase</keyword>
<keyword id="KW-0028">Amino-acid biosynthesis</keyword>
<keyword id="KW-0963">Cytoplasm</keyword>
<keyword id="KW-0486">Methionine biosynthesis</keyword>
<keyword id="KW-1185">Reference proteome</keyword>
<keyword id="KW-0808">Transferase</keyword>
<evidence type="ECO:0000255" key="1">
    <source>
        <dbReference type="HAMAP-Rule" id="MF_00295"/>
    </source>
</evidence>
<dbReference type="EC" id="2.3.1.31" evidence="1"/>
<dbReference type="EMBL" id="AE005672">
    <property type="protein sequence ID" value="AAK75662.1"/>
    <property type="molecule type" value="Genomic_DNA"/>
</dbReference>
<dbReference type="PIR" id="E95183">
    <property type="entry name" value="E95183"/>
</dbReference>
<dbReference type="RefSeq" id="WP_001122709.1">
    <property type="nucleotide sequence ID" value="NC_003028.3"/>
</dbReference>
<dbReference type="SMR" id="Q97PM9"/>
<dbReference type="IntAct" id="Q97PM9">
    <property type="interactions" value="1"/>
</dbReference>
<dbReference type="PaxDb" id="170187-SP_1576"/>
<dbReference type="EnsemblBacteria" id="AAK75662">
    <property type="protein sequence ID" value="AAK75662"/>
    <property type="gene ID" value="SP_1576"/>
</dbReference>
<dbReference type="KEGG" id="spn:SP_1576"/>
<dbReference type="eggNOG" id="COG1897">
    <property type="taxonomic scope" value="Bacteria"/>
</dbReference>
<dbReference type="PhylomeDB" id="Q97PM9"/>
<dbReference type="BioCyc" id="SPNE170187:G1FZB-1595-MONOMER"/>
<dbReference type="UniPathway" id="UPA00051">
    <property type="reaction ID" value="UER00074"/>
</dbReference>
<dbReference type="Proteomes" id="UP000000585">
    <property type="component" value="Chromosome"/>
</dbReference>
<dbReference type="GO" id="GO:0005737">
    <property type="term" value="C:cytoplasm"/>
    <property type="evidence" value="ECO:0007669"/>
    <property type="project" value="UniProtKB-SubCell"/>
</dbReference>
<dbReference type="GO" id="GO:0004414">
    <property type="term" value="F:homoserine O-acetyltransferase activity"/>
    <property type="evidence" value="ECO:0007669"/>
    <property type="project" value="UniProtKB-EC"/>
</dbReference>
<dbReference type="GO" id="GO:0008899">
    <property type="term" value="F:homoserine O-succinyltransferase activity"/>
    <property type="evidence" value="ECO:0007669"/>
    <property type="project" value="UniProtKB-UniRule"/>
</dbReference>
<dbReference type="GO" id="GO:0019281">
    <property type="term" value="P:L-methionine biosynthetic process from homoserine via O-succinyl-L-homoserine and cystathionine"/>
    <property type="evidence" value="ECO:0007669"/>
    <property type="project" value="InterPro"/>
</dbReference>
<dbReference type="CDD" id="cd03131">
    <property type="entry name" value="GATase1_HTS"/>
    <property type="match status" value="1"/>
</dbReference>
<dbReference type="FunFam" id="3.40.50.880:FF:000004">
    <property type="entry name" value="Homoserine O-succinyltransferase"/>
    <property type="match status" value="1"/>
</dbReference>
<dbReference type="Gene3D" id="3.40.50.880">
    <property type="match status" value="1"/>
</dbReference>
<dbReference type="HAMAP" id="MF_00295">
    <property type="entry name" value="MetA_acyltransf"/>
    <property type="match status" value="1"/>
</dbReference>
<dbReference type="InterPro" id="IPR029062">
    <property type="entry name" value="Class_I_gatase-like"/>
</dbReference>
<dbReference type="InterPro" id="IPR005697">
    <property type="entry name" value="HST_MetA"/>
</dbReference>
<dbReference type="InterPro" id="IPR033752">
    <property type="entry name" value="MetA_family"/>
</dbReference>
<dbReference type="NCBIfam" id="TIGR01001">
    <property type="entry name" value="metA"/>
    <property type="match status" value="1"/>
</dbReference>
<dbReference type="PANTHER" id="PTHR20919">
    <property type="entry name" value="HOMOSERINE O-SUCCINYLTRANSFERASE"/>
    <property type="match status" value="1"/>
</dbReference>
<dbReference type="PANTHER" id="PTHR20919:SF0">
    <property type="entry name" value="HOMOSERINE O-SUCCINYLTRANSFERASE"/>
    <property type="match status" value="1"/>
</dbReference>
<dbReference type="Pfam" id="PF04204">
    <property type="entry name" value="HTS"/>
    <property type="match status" value="1"/>
</dbReference>
<dbReference type="PIRSF" id="PIRSF000450">
    <property type="entry name" value="H_ser_succinyltr"/>
    <property type="match status" value="1"/>
</dbReference>
<dbReference type="SUPFAM" id="SSF52317">
    <property type="entry name" value="Class I glutamine amidotransferase-like"/>
    <property type="match status" value="1"/>
</dbReference>
<sequence>MPIRIDKKLPAVEILRTENIFVMDDQRAAHQDIRPLKILILNLMPQKMVTETQLLRHLANTPLQLDIDFLYMESHRSKTTRSEHMETFYKTFPEVKDEYFDGMIITGAPVEHLPFEEVDYWEEFRQMLEWSKTHVYSTLHICWGAQAGLYLRYGVEKYQMDSKLSGIYPQDTLKEGHLLFRGFDDSYVSPHSRHTEISKEEVLNKTNLEILSEGPQVGVSILASRDLREIYSFGHLEYDRDTLAKEYFRDRDAGFDPHIPENYFKDDDVNQVPCLCWSSSAALFFSNWVDHAVYQETPFDWRKIEDDASAYGYL</sequence>
<protein>
    <recommendedName>
        <fullName evidence="1">Homoserine O-acetyltransferase</fullName>
        <shortName evidence="1">HAT</shortName>
        <ecNumber evidence="1">2.3.1.31</ecNumber>
    </recommendedName>
    <alternativeName>
        <fullName evidence="1">Homoserine transacetylase</fullName>
        <shortName evidence="1">HTA</shortName>
    </alternativeName>
</protein>
<comment type="function">
    <text evidence="1">Transfers an acetyl group from acetyl-CoA to L-homoserine, forming acetyl-L-homoserine.</text>
</comment>
<comment type="catalytic activity">
    <reaction evidence="1">
        <text>L-homoserine + acetyl-CoA = O-acetyl-L-homoserine + CoA</text>
        <dbReference type="Rhea" id="RHEA:13701"/>
        <dbReference type="ChEBI" id="CHEBI:57287"/>
        <dbReference type="ChEBI" id="CHEBI:57288"/>
        <dbReference type="ChEBI" id="CHEBI:57476"/>
        <dbReference type="ChEBI" id="CHEBI:57716"/>
        <dbReference type="EC" id="2.3.1.31"/>
    </reaction>
</comment>
<comment type="pathway">
    <text evidence="1">Amino-acid biosynthesis; L-methionine biosynthesis via de novo pathway; O-acetyl-L-homoserine from L-homoserine: step 1/1.</text>
</comment>
<comment type="interaction">
    <interactant intactId="EBI-6474064">
        <id>Q97PM9</id>
    </interactant>
    <interactant intactId="EBI-6474058">
        <id>A0A0H2UN55</id>
        <label>SP_0100</label>
    </interactant>
    <organismsDiffer>false</organismsDiffer>
    <experiments>3</experiments>
</comment>
<comment type="subcellular location">
    <subcellularLocation>
        <location evidence="1">Cytoplasm</location>
    </subcellularLocation>
</comment>
<comment type="similarity">
    <text evidence="1">Belongs to the MetA family.</text>
</comment>
<name>METAA_STRPN</name>
<reference key="1">
    <citation type="journal article" date="2001" name="Science">
        <title>Complete genome sequence of a virulent isolate of Streptococcus pneumoniae.</title>
        <authorList>
            <person name="Tettelin H."/>
            <person name="Nelson K.E."/>
            <person name="Paulsen I.T."/>
            <person name="Eisen J.A."/>
            <person name="Read T.D."/>
            <person name="Peterson S.N."/>
            <person name="Heidelberg J.F."/>
            <person name="DeBoy R.T."/>
            <person name="Haft D.H."/>
            <person name="Dodson R.J."/>
            <person name="Durkin A.S."/>
            <person name="Gwinn M.L."/>
            <person name="Kolonay J.F."/>
            <person name="Nelson W.C."/>
            <person name="Peterson J.D."/>
            <person name="Umayam L.A."/>
            <person name="White O."/>
            <person name="Salzberg S.L."/>
            <person name="Lewis M.R."/>
            <person name="Radune D."/>
            <person name="Holtzapple E.K."/>
            <person name="Khouri H.M."/>
            <person name="Wolf A.M."/>
            <person name="Utterback T.R."/>
            <person name="Hansen C.L."/>
            <person name="McDonald L.A."/>
            <person name="Feldblyum T.V."/>
            <person name="Angiuoli S.V."/>
            <person name="Dickinson T."/>
            <person name="Hickey E.K."/>
            <person name="Holt I.E."/>
            <person name="Loftus B.J."/>
            <person name="Yang F."/>
            <person name="Smith H.O."/>
            <person name="Venter J.C."/>
            <person name="Dougherty B.A."/>
            <person name="Morrison D.A."/>
            <person name="Hollingshead S.K."/>
            <person name="Fraser C.M."/>
        </authorList>
    </citation>
    <scope>NUCLEOTIDE SEQUENCE [LARGE SCALE GENOMIC DNA]</scope>
    <source>
        <strain>ATCC BAA-334 / TIGR4</strain>
    </source>
</reference>
<accession>Q97PM9</accession>
<proteinExistence type="evidence at protein level"/>